<comment type="function">
    <text>Appears to play a role in cell sterol metabolism. It may function to protect cells from over-accumulation of cholesterol.</text>
</comment>
<comment type="interaction">
    <interactant intactId="EBI-1049478">
        <id>Q00341</id>
    </interactant>
    <interactant intactId="EBI-932887">
        <id>P49711</id>
        <label>CTCF</label>
    </interactant>
    <organismsDiffer>false</organismsDiffer>
    <experiments>4</experiments>
</comment>
<comment type="interaction">
    <interactant intactId="EBI-1049478">
        <id>Q00341</id>
    </interactant>
    <interactant intactId="EBI-297202">
        <id>Q06609</id>
        <label>RAD51</label>
    </interactant>
    <organismsDiffer>false</organismsDiffer>
    <experiments>2</experiments>
</comment>
<comment type="subcellular location">
    <subcellularLocation>
        <location evidence="7">Cytoplasm</location>
    </subcellularLocation>
    <subcellularLocation>
        <location evidence="7">Nucleus</location>
    </subcellularLocation>
</comment>
<comment type="alternative products">
    <event type="alternative splicing"/>
    <isoform>
        <id>Q00341-1</id>
        <name>1</name>
        <sequence type="displayed"/>
    </isoform>
    <isoform>
        <id>Q00341-2</id>
        <name>2</name>
        <sequence type="described" ref="VSP_044924 VSP_044925"/>
    </isoform>
</comment>
<protein>
    <recommendedName>
        <fullName>Vigilin</fullName>
    </recommendedName>
    <alternativeName>
        <fullName>High density lipoprotein-binding protein</fullName>
        <shortName>HDL-binding protein</shortName>
    </alternativeName>
</protein>
<reference key="1">
    <citation type="journal article" date="1992" name="J. Biol. Chem.">
        <title>Cloning and expression of a cellular high density lipoprotein-binding protein that is up-regulated by cholesterol loading of cells.</title>
        <authorList>
            <person name="McKnight G.L."/>
            <person name="Reasoner J."/>
            <person name="Gilbert T."/>
            <person name="Sundquist K.O."/>
            <person name="Hokland B."/>
            <person name="McKernan P.A."/>
            <person name="Champagne J."/>
            <person name="Johnson C.J."/>
            <person name="Bailey M.C."/>
            <person name="Holly R."/>
            <person name="O'Hara P.J."/>
            <person name="Oram J.F."/>
        </authorList>
    </citation>
    <scope>NUCLEOTIDE SEQUENCE [MRNA] (ISOFORM 1)</scope>
</reference>
<reference key="2">
    <citation type="journal article" date="2004" name="Nat. Genet.">
        <title>Complete sequencing and characterization of 21,243 full-length human cDNAs.</title>
        <authorList>
            <person name="Ota T."/>
            <person name="Suzuki Y."/>
            <person name="Nishikawa T."/>
            <person name="Otsuki T."/>
            <person name="Sugiyama T."/>
            <person name="Irie R."/>
            <person name="Wakamatsu A."/>
            <person name="Hayashi K."/>
            <person name="Sato H."/>
            <person name="Nagai K."/>
            <person name="Kimura K."/>
            <person name="Makita H."/>
            <person name="Sekine M."/>
            <person name="Obayashi M."/>
            <person name="Nishi T."/>
            <person name="Shibahara T."/>
            <person name="Tanaka T."/>
            <person name="Ishii S."/>
            <person name="Yamamoto J."/>
            <person name="Saito K."/>
            <person name="Kawai Y."/>
            <person name="Isono Y."/>
            <person name="Nakamura Y."/>
            <person name="Nagahari K."/>
            <person name="Murakami K."/>
            <person name="Yasuda T."/>
            <person name="Iwayanagi T."/>
            <person name="Wagatsuma M."/>
            <person name="Shiratori A."/>
            <person name="Sudo H."/>
            <person name="Hosoiri T."/>
            <person name="Kaku Y."/>
            <person name="Kodaira H."/>
            <person name="Kondo H."/>
            <person name="Sugawara M."/>
            <person name="Takahashi M."/>
            <person name="Kanda K."/>
            <person name="Yokoi T."/>
            <person name="Furuya T."/>
            <person name="Kikkawa E."/>
            <person name="Omura Y."/>
            <person name="Abe K."/>
            <person name="Kamihara K."/>
            <person name="Katsuta N."/>
            <person name="Sato K."/>
            <person name="Tanikawa M."/>
            <person name="Yamazaki M."/>
            <person name="Ninomiya K."/>
            <person name="Ishibashi T."/>
            <person name="Yamashita H."/>
            <person name="Murakawa K."/>
            <person name="Fujimori K."/>
            <person name="Tanai H."/>
            <person name="Kimata M."/>
            <person name="Watanabe M."/>
            <person name="Hiraoka S."/>
            <person name="Chiba Y."/>
            <person name="Ishida S."/>
            <person name="Ono Y."/>
            <person name="Takiguchi S."/>
            <person name="Watanabe S."/>
            <person name="Yosida M."/>
            <person name="Hotuta T."/>
            <person name="Kusano J."/>
            <person name="Kanehori K."/>
            <person name="Takahashi-Fujii A."/>
            <person name="Hara H."/>
            <person name="Tanase T.-O."/>
            <person name="Nomura Y."/>
            <person name="Togiya S."/>
            <person name="Komai F."/>
            <person name="Hara R."/>
            <person name="Takeuchi K."/>
            <person name="Arita M."/>
            <person name="Imose N."/>
            <person name="Musashino K."/>
            <person name="Yuuki H."/>
            <person name="Oshima A."/>
            <person name="Sasaki N."/>
            <person name="Aotsuka S."/>
            <person name="Yoshikawa Y."/>
            <person name="Matsunawa H."/>
            <person name="Ichihara T."/>
            <person name="Shiohata N."/>
            <person name="Sano S."/>
            <person name="Moriya S."/>
            <person name="Momiyama H."/>
            <person name="Satoh N."/>
            <person name="Takami S."/>
            <person name="Terashima Y."/>
            <person name="Suzuki O."/>
            <person name="Nakagawa S."/>
            <person name="Senoh A."/>
            <person name="Mizoguchi H."/>
            <person name="Goto Y."/>
            <person name="Shimizu F."/>
            <person name="Wakebe H."/>
            <person name="Hishigaki H."/>
            <person name="Watanabe T."/>
            <person name="Sugiyama A."/>
            <person name="Takemoto M."/>
            <person name="Kawakami B."/>
            <person name="Yamazaki M."/>
            <person name="Watanabe K."/>
            <person name="Kumagai A."/>
            <person name="Itakura S."/>
            <person name="Fukuzumi Y."/>
            <person name="Fujimori Y."/>
            <person name="Komiyama M."/>
            <person name="Tashiro H."/>
            <person name="Tanigami A."/>
            <person name="Fujiwara T."/>
            <person name="Ono T."/>
            <person name="Yamada K."/>
            <person name="Fujii Y."/>
            <person name="Ozaki K."/>
            <person name="Hirao M."/>
            <person name="Ohmori Y."/>
            <person name="Kawabata A."/>
            <person name="Hikiji T."/>
            <person name="Kobatake N."/>
            <person name="Inagaki H."/>
            <person name="Ikema Y."/>
            <person name="Okamoto S."/>
            <person name="Okitani R."/>
            <person name="Kawakami T."/>
            <person name="Noguchi S."/>
            <person name="Itoh T."/>
            <person name="Shigeta K."/>
            <person name="Senba T."/>
            <person name="Matsumura K."/>
            <person name="Nakajima Y."/>
            <person name="Mizuno T."/>
            <person name="Morinaga M."/>
            <person name="Sasaki M."/>
            <person name="Togashi T."/>
            <person name="Oyama M."/>
            <person name="Hata H."/>
            <person name="Watanabe M."/>
            <person name="Komatsu T."/>
            <person name="Mizushima-Sugano J."/>
            <person name="Satoh T."/>
            <person name="Shirai Y."/>
            <person name="Takahashi Y."/>
            <person name="Nakagawa K."/>
            <person name="Okumura K."/>
            <person name="Nagase T."/>
            <person name="Nomura N."/>
            <person name="Kikuchi H."/>
            <person name="Masuho Y."/>
            <person name="Yamashita R."/>
            <person name="Nakai K."/>
            <person name="Yada T."/>
            <person name="Nakamura Y."/>
            <person name="Ohara O."/>
            <person name="Isogai T."/>
            <person name="Sugano S."/>
        </authorList>
    </citation>
    <scope>NUCLEOTIDE SEQUENCE [LARGE SCALE MRNA] (ISOFORM 2)</scope>
    <source>
        <tissue>Placenta</tissue>
    </source>
</reference>
<reference key="3">
    <citation type="journal article" date="2005" name="Nature">
        <title>Generation and annotation of the DNA sequences of human chromosomes 2 and 4.</title>
        <authorList>
            <person name="Hillier L.W."/>
            <person name="Graves T.A."/>
            <person name="Fulton R.S."/>
            <person name="Fulton L.A."/>
            <person name="Pepin K.H."/>
            <person name="Minx P."/>
            <person name="Wagner-McPherson C."/>
            <person name="Layman D."/>
            <person name="Wylie K."/>
            <person name="Sekhon M."/>
            <person name="Becker M.C."/>
            <person name="Fewell G.A."/>
            <person name="Delehaunty K.D."/>
            <person name="Miner T.L."/>
            <person name="Nash W.E."/>
            <person name="Kremitzki C."/>
            <person name="Oddy L."/>
            <person name="Du H."/>
            <person name="Sun H."/>
            <person name="Bradshaw-Cordum H."/>
            <person name="Ali J."/>
            <person name="Carter J."/>
            <person name="Cordes M."/>
            <person name="Harris A."/>
            <person name="Isak A."/>
            <person name="van Brunt A."/>
            <person name="Nguyen C."/>
            <person name="Du F."/>
            <person name="Courtney L."/>
            <person name="Kalicki J."/>
            <person name="Ozersky P."/>
            <person name="Abbott S."/>
            <person name="Armstrong J."/>
            <person name="Belter E.A."/>
            <person name="Caruso L."/>
            <person name="Cedroni M."/>
            <person name="Cotton M."/>
            <person name="Davidson T."/>
            <person name="Desai A."/>
            <person name="Elliott G."/>
            <person name="Erb T."/>
            <person name="Fronick C."/>
            <person name="Gaige T."/>
            <person name="Haakenson W."/>
            <person name="Haglund K."/>
            <person name="Holmes A."/>
            <person name="Harkins R."/>
            <person name="Kim K."/>
            <person name="Kruchowski S.S."/>
            <person name="Strong C.M."/>
            <person name="Grewal N."/>
            <person name="Goyea E."/>
            <person name="Hou S."/>
            <person name="Levy A."/>
            <person name="Martinka S."/>
            <person name="Mead K."/>
            <person name="McLellan M.D."/>
            <person name="Meyer R."/>
            <person name="Randall-Maher J."/>
            <person name="Tomlinson C."/>
            <person name="Dauphin-Kohlberg S."/>
            <person name="Kozlowicz-Reilly A."/>
            <person name="Shah N."/>
            <person name="Swearengen-Shahid S."/>
            <person name="Snider J."/>
            <person name="Strong J.T."/>
            <person name="Thompson J."/>
            <person name="Yoakum M."/>
            <person name="Leonard S."/>
            <person name="Pearman C."/>
            <person name="Trani L."/>
            <person name="Radionenko M."/>
            <person name="Waligorski J.E."/>
            <person name="Wang C."/>
            <person name="Rock S.M."/>
            <person name="Tin-Wollam A.-M."/>
            <person name="Maupin R."/>
            <person name="Latreille P."/>
            <person name="Wendl M.C."/>
            <person name="Yang S.-P."/>
            <person name="Pohl C."/>
            <person name="Wallis J.W."/>
            <person name="Spieth J."/>
            <person name="Bieri T.A."/>
            <person name="Berkowicz N."/>
            <person name="Nelson J.O."/>
            <person name="Osborne J."/>
            <person name="Ding L."/>
            <person name="Meyer R."/>
            <person name="Sabo A."/>
            <person name="Shotland Y."/>
            <person name="Sinha P."/>
            <person name="Wohldmann P.E."/>
            <person name="Cook L.L."/>
            <person name="Hickenbotham M.T."/>
            <person name="Eldred J."/>
            <person name="Williams D."/>
            <person name="Jones T.A."/>
            <person name="She X."/>
            <person name="Ciccarelli F.D."/>
            <person name="Izaurralde E."/>
            <person name="Taylor J."/>
            <person name="Schmutz J."/>
            <person name="Myers R.M."/>
            <person name="Cox D.R."/>
            <person name="Huang X."/>
            <person name="McPherson J.D."/>
            <person name="Mardis E.R."/>
            <person name="Clifton S.W."/>
            <person name="Warren W.C."/>
            <person name="Chinwalla A.T."/>
            <person name="Eddy S.R."/>
            <person name="Marra M.A."/>
            <person name="Ovcharenko I."/>
            <person name="Furey T.S."/>
            <person name="Miller W."/>
            <person name="Eichler E.E."/>
            <person name="Bork P."/>
            <person name="Suyama M."/>
            <person name="Torrents D."/>
            <person name="Waterston R.H."/>
            <person name="Wilson R.K."/>
        </authorList>
    </citation>
    <scope>NUCLEOTIDE SEQUENCE [LARGE SCALE GENOMIC DNA]</scope>
</reference>
<reference key="4">
    <citation type="journal article" date="2004" name="Genome Res.">
        <title>The status, quality, and expansion of the NIH full-length cDNA project: the Mammalian Gene Collection (MGC).</title>
        <authorList>
            <consortium name="The MGC Project Team"/>
        </authorList>
    </citation>
    <scope>NUCLEOTIDE SEQUENCE [LARGE SCALE MRNA] (ISOFORM 1)</scope>
    <source>
        <tissue>Muscle</tissue>
    </source>
</reference>
<reference key="5">
    <citation type="submission" date="2008-03" db="UniProtKB">
        <authorList>
            <person name="Bienvenut W.V."/>
            <person name="Matallanas D."/>
            <person name="Cooper W.N."/>
            <person name="Kolch W."/>
            <person name="Glen H."/>
            <person name="Frame M.C."/>
        </authorList>
    </citation>
    <scope>PROTEIN SEQUENCE OF 2-16; 73-87; 147-159; 208-222; 232-283; 315-324; 350-377; 483-494; 496-503; 535-557; 649-663; 902-908 AND 1120-1137</scope>
    <scope>CLEAVAGE OF INITIATOR METHIONINE</scope>
    <scope>ACETYLATION AT SER-2</scope>
    <scope>IDENTIFICATION BY MASS SPECTROMETRY</scope>
    <source>
        <tissue>Mammary carcinoma</tissue>
        <tissue>Osteosarcoma</tissue>
    </source>
</reference>
<reference key="6">
    <citation type="journal article" date="1996" name="FEBS Lett.">
        <title>Vigilin contains a functional nuclear localisation sequence and is present in both the cytoplasm and the nucleus.</title>
        <authorList>
            <person name="Kugler S."/>
            <person name="Grunweller A."/>
            <person name="Probst C."/>
            <person name="Klinger M."/>
            <person name="Mueller P.K."/>
            <person name="Kruse C."/>
        </authorList>
    </citation>
    <scope>SUBCELLULAR LOCATION</scope>
</reference>
<reference key="7">
    <citation type="journal article" date="2005" name="Nat. Biotechnol.">
        <title>Immunoaffinity profiling of tyrosine phosphorylation in cancer cells.</title>
        <authorList>
            <person name="Rush J."/>
            <person name="Moritz A."/>
            <person name="Lee K.A."/>
            <person name="Guo A."/>
            <person name="Goss V.L."/>
            <person name="Spek E.J."/>
            <person name="Zhang H."/>
            <person name="Zha X.-M."/>
            <person name="Polakiewicz R.D."/>
            <person name="Comb M.J."/>
        </authorList>
    </citation>
    <scope>PHOSPHORYLATION [LARGE SCALE ANALYSIS] AT TYR-437</scope>
    <scope>IDENTIFICATION BY MASS SPECTROMETRY [LARGE SCALE ANALYSIS]</scope>
</reference>
<reference key="8">
    <citation type="journal article" date="2008" name="Proc. Natl. Acad. Sci. U.S.A.">
        <title>A quantitative atlas of mitotic phosphorylation.</title>
        <authorList>
            <person name="Dephoure N."/>
            <person name="Zhou C."/>
            <person name="Villen J."/>
            <person name="Beausoleil S.A."/>
            <person name="Bakalarski C.E."/>
            <person name="Elledge S.J."/>
            <person name="Gygi S.P."/>
        </authorList>
    </citation>
    <scope>PHOSPHORYLATION [LARGE SCALE ANALYSIS] AT SER-31</scope>
    <scope>IDENTIFICATION BY MASS SPECTROMETRY [LARGE SCALE ANALYSIS]</scope>
    <source>
        <tissue>Cervix carcinoma</tissue>
    </source>
</reference>
<reference key="9">
    <citation type="journal article" date="2009" name="Anal. Chem.">
        <title>Lys-N and trypsin cover complementary parts of the phosphoproteome in a refined SCX-based approach.</title>
        <authorList>
            <person name="Gauci S."/>
            <person name="Helbig A.O."/>
            <person name="Slijper M."/>
            <person name="Krijgsveld J."/>
            <person name="Heck A.J."/>
            <person name="Mohammed S."/>
        </authorList>
    </citation>
    <scope>ACETYLATION [LARGE SCALE ANALYSIS] AT SER-2</scope>
    <scope>CLEAVAGE OF INITIATOR METHIONINE [LARGE SCALE ANALYSIS]</scope>
    <scope>IDENTIFICATION BY MASS SPECTROMETRY [LARGE SCALE ANALYSIS]</scope>
</reference>
<reference key="10">
    <citation type="journal article" date="2009" name="Mol. Cell. Proteomics">
        <title>Large-scale proteomics analysis of the human kinome.</title>
        <authorList>
            <person name="Oppermann F.S."/>
            <person name="Gnad F."/>
            <person name="Olsen J.V."/>
            <person name="Hornberger R."/>
            <person name="Greff Z."/>
            <person name="Keri G."/>
            <person name="Mann M."/>
            <person name="Daub H."/>
        </authorList>
    </citation>
    <scope>PHOSPHORYLATION [LARGE SCALE ANALYSIS] AT SER-31</scope>
    <scope>IDENTIFICATION BY MASS SPECTROMETRY [LARGE SCALE ANALYSIS]</scope>
</reference>
<reference key="11">
    <citation type="journal article" date="2009" name="Sci. Signal.">
        <title>Quantitative phosphoproteomic analysis of T cell receptor signaling reveals system-wide modulation of protein-protein interactions.</title>
        <authorList>
            <person name="Mayya V."/>
            <person name="Lundgren D.H."/>
            <person name="Hwang S.-I."/>
            <person name="Rezaul K."/>
            <person name="Wu L."/>
            <person name="Eng J.K."/>
            <person name="Rodionov V."/>
            <person name="Han D.K."/>
        </authorList>
    </citation>
    <scope>PHOSPHORYLATION [LARGE SCALE ANALYSIS] AT SER-31</scope>
    <scope>IDENTIFICATION BY MASS SPECTROMETRY [LARGE SCALE ANALYSIS]</scope>
    <source>
        <tissue>Leukemic T-cell</tissue>
    </source>
</reference>
<reference key="12">
    <citation type="journal article" date="2010" name="Sci. Signal.">
        <title>Quantitative phosphoproteomics reveals widespread full phosphorylation site occupancy during mitosis.</title>
        <authorList>
            <person name="Olsen J.V."/>
            <person name="Vermeulen M."/>
            <person name="Santamaria A."/>
            <person name="Kumar C."/>
            <person name="Miller M.L."/>
            <person name="Jensen L.J."/>
            <person name="Gnad F."/>
            <person name="Cox J."/>
            <person name="Jensen T.S."/>
            <person name="Nigg E.A."/>
            <person name="Brunak S."/>
            <person name="Mann M."/>
        </authorList>
    </citation>
    <scope>PHOSPHORYLATION [LARGE SCALE ANALYSIS] AT SER-31</scope>
    <scope>IDENTIFICATION BY MASS SPECTROMETRY [LARGE SCALE ANALYSIS]</scope>
    <source>
        <tissue>Cervix carcinoma</tissue>
    </source>
</reference>
<reference key="13">
    <citation type="journal article" date="2011" name="Sci. Signal.">
        <title>System-wide temporal characterization of the proteome and phosphoproteome of human embryonic stem cell differentiation.</title>
        <authorList>
            <person name="Rigbolt K.T."/>
            <person name="Prokhorova T.A."/>
            <person name="Akimov V."/>
            <person name="Henningsen J."/>
            <person name="Johansen P.T."/>
            <person name="Kratchmarova I."/>
            <person name="Kassem M."/>
            <person name="Mann M."/>
            <person name="Olsen J.V."/>
            <person name="Blagoev B."/>
        </authorList>
    </citation>
    <scope>PHOSPHORYLATION [LARGE SCALE ANALYSIS] AT SER-31</scope>
    <scope>IDENTIFICATION BY MASS SPECTROMETRY [LARGE SCALE ANALYSIS]</scope>
</reference>
<reference key="14">
    <citation type="journal article" date="2012" name="Mol. Cell. Proteomics">
        <title>Comparative large-scale characterisation of plant vs. mammal proteins reveals similar and idiosyncratic N-alpha acetylation features.</title>
        <authorList>
            <person name="Bienvenut W.V."/>
            <person name="Sumpton D."/>
            <person name="Martinez A."/>
            <person name="Lilla S."/>
            <person name="Espagne C."/>
            <person name="Meinnel T."/>
            <person name="Giglione C."/>
        </authorList>
    </citation>
    <scope>ACETYLATION [LARGE SCALE ANALYSIS] AT SER-2</scope>
    <scope>CLEAVAGE OF INITIATOR METHIONINE [LARGE SCALE ANALYSIS]</scope>
    <scope>IDENTIFICATION BY MASS SPECTROMETRY [LARGE SCALE ANALYSIS]</scope>
</reference>
<reference key="15">
    <citation type="journal article" date="2013" name="J. Proteome Res.">
        <title>Toward a comprehensive characterization of a human cancer cell phosphoproteome.</title>
        <authorList>
            <person name="Zhou H."/>
            <person name="Di Palma S."/>
            <person name="Preisinger C."/>
            <person name="Peng M."/>
            <person name="Polat A.N."/>
            <person name="Heck A.J."/>
            <person name="Mohammed S."/>
        </authorList>
    </citation>
    <scope>PHOSPHORYLATION [LARGE SCALE ANALYSIS] AT THR-8; SER-11; SER-31 AND SER-317</scope>
    <scope>IDENTIFICATION BY MASS SPECTROMETRY [LARGE SCALE ANALYSIS]</scope>
    <source>
        <tissue>Cervix carcinoma</tissue>
        <tissue>Erythroleukemia</tissue>
    </source>
</reference>
<reference key="16">
    <citation type="journal article" date="2014" name="J. Proteomics">
        <title>An enzyme assisted RP-RPLC approach for in-depth analysis of human liver phosphoproteome.</title>
        <authorList>
            <person name="Bian Y."/>
            <person name="Song C."/>
            <person name="Cheng K."/>
            <person name="Dong M."/>
            <person name="Wang F."/>
            <person name="Huang J."/>
            <person name="Sun D."/>
            <person name="Wang L."/>
            <person name="Ye M."/>
            <person name="Zou H."/>
        </authorList>
    </citation>
    <scope>PHOSPHORYLATION [LARGE SCALE ANALYSIS] AT SER-31; SER-1247 AND SER-1252</scope>
    <scope>IDENTIFICATION BY MASS SPECTROMETRY [LARGE SCALE ANALYSIS]</scope>
    <source>
        <tissue>Liver</tissue>
    </source>
</reference>
<reference key="17">
    <citation type="journal article" date="2015" name="Proteomics">
        <title>N-terminome analysis of the human mitochondrial proteome.</title>
        <authorList>
            <person name="Vaca Jacome A.S."/>
            <person name="Rabilloud T."/>
            <person name="Schaeffer-Reiss C."/>
            <person name="Rompais M."/>
            <person name="Ayoub D."/>
            <person name="Lane L."/>
            <person name="Bairoch A."/>
            <person name="Van Dorsselaer A."/>
            <person name="Carapito C."/>
        </authorList>
    </citation>
    <scope>IDENTIFICATION BY MASS SPECTROMETRY [LARGE SCALE ANALYSIS]</scope>
</reference>
<reference key="18">
    <citation type="submission" date="2005-11" db="PDB data bank">
        <title>Solution structure of the 1st, 4th, 8th, 12th, 13th and 14th KH type-I domains from human vigilin.</title>
        <authorList>
            <consortium name="RIKEN structural genomics initiative (RSGI)"/>
        </authorList>
    </citation>
    <scope>STRUCTURE BY NMR OF 142-222; 345-434; 645-727 AND 964-1200</scope>
</reference>
<reference key="19">
    <citation type="journal article" date="2006" name="Science">
        <title>The consensus coding sequences of human breast and colorectal cancers.</title>
        <authorList>
            <person name="Sjoeblom T."/>
            <person name="Jones S."/>
            <person name="Wood L.D."/>
            <person name="Parsons D.W."/>
            <person name="Lin J."/>
            <person name="Barber T.D."/>
            <person name="Mandelker D."/>
            <person name="Leary R.J."/>
            <person name="Ptak J."/>
            <person name="Silliman N."/>
            <person name="Szabo S."/>
            <person name="Buckhaults P."/>
            <person name="Farrell C."/>
            <person name="Meeh P."/>
            <person name="Markowitz S.D."/>
            <person name="Willis J."/>
            <person name="Dawson D."/>
            <person name="Willson J.K.V."/>
            <person name="Gazdar A.F."/>
            <person name="Hartigan J."/>
            <person name="Wu L."/>
            <person name="Liu C."/>
            <person name="Parmigiani G."/>
            <person name="Park B.H."/>
            <person name="Bachman K.E."/>
            <person name="Papadopoulos N."/>
            <person name="Vogelstein B."/>
            <person name="Kinzler K.W."/>
            <person name="Velculescu V.E."/>
        </authorList>
    </citation>
    <scope>VARIANTS [LARGE SCALE ANALYSIS] ASN-568 AND VAL-939</scope>
</reference>
<reference key="20">
    <citation type="journal article" date="2011" name="BMC Syst. Biol.">
        <title>Initial characterization of the human central proteome.</title>
        <authorList>
            <person name="Burkard T.R."/>
            <person name="Planyavsky M."/>
            <person name="Kaupe I."/>
            <person name="Breitwieser F.P."/>
            <person name="Buerckstuemmer T."/>
            <person name="Bennett K.L."/>
            <person name="Superti-Furga G."/>
            <person name="Colinge J."/>
        </authorList>
    </citation>
    <scope>IDENTIFICATION BY MASS SPECTROMETRY [LARGE SCALE ANALYSIS]</scope>
</reference>
<organism>
    <name type="scientific">Homo sapiens</name>
    <name type="common">Human</name>
    <dbReference type="NCBI Taxonomy" id="9606"/>
    <lineage>
        <taxon>Eukaryota</taxon>
        <taxon>Metazoa</taxon>
        <taxon>Chordata</taxon>
        <taxon>Craniata</taxon>
        <taxon>Vertebrata</taxon>
        <taxon>Euteleostomi</taxon>
        <taxon>Mammalia</taxon>
        <taxon>Eutheria</taxon>
        <taxon>Euarchontoglires</taxon>
        <taxon>Primates</taxon>
        <taxon>Haplorrhini</taxon>
        <taxon>Catarrhini</taxon>
        <taxon>Hominidae</taxon>
        <taxon>Homo</taxon>
    </lineage>
</organism>
<dbReference type="EMBL" id="M64098">
    <property type="protein sequence ID" value="AAA35962.1"/>
    <property type="molecule type" value="mRNA"/>
</dbReference>
<dbReference type="EMBL" id="AK300312">
    <property type="protein sequence ID" value="BAG62064.1"/>
    <property type="molecule type" value="mRNA"/>
</dbReference>
<dbReference type="EMBL" id="AC104841">
    <property type="protein sequence ID" value="AAY14717.1"/>
    <property type="molecule type" value="Genomic_DNA"/>
</dbReference>
<dbReference type="EMBL" id="BC001179">
    <property type="protein sequence ID" value="AAH01179.1"/>
    <property type="molecule type" value="mRNA"/>
</dbReference>
<dbReference type="CCDS" id="CCDS2547.1">
    <molecule id="Q00341-1"/>
</dbReference>
<dbReference type="CCDS" id="CCDS58760.1">
    <molecule id="Q00341-2"/>
</dbReference>
<dbReference type="PIR" id="A44125">
    <property type="entry name" value="A44125"/>
</dbReference>
<dbReference type="RefSeq" id="NP_001230829.1">
    <molecule id="Q00341-2"/>
    <property type="nucleotide sequence ID" value="NM_001243900.3"/>
</dbReference>
<dbReference type="RefSeq" id="NP_001307894.1">
    <molecule id="Q00341-1"/>
    <property type="nucleotide sequence ID" value="NM_001320965.3"/>
</dbReference>
<dbReference type="RefSeq" id="NP_001307895.1">
    <molecule id="Q00341-1"/>
    <property type="nucleotide sequence ID" value="NM_001320966.3"/>
</dbReference>
<dbReference type="RefSeq" id="NP_005327.1">
    <molecule id="Q00341-1"/>
    <property type="nucleotide sequence ID" value="NM_005336.6"/>
</dbReference>
<dbReference type="RefSeq" id="NP_976221.1">
    <molecule id="Q00341-1"/>
    <property type="nucleotide sequence ID" value="NM_203346.6"/>
</dbReference>
<dbReference type="RefSeq" id="XP_005247059.2">
    <molecule id="Q00341-1"/>
    <property type="nucleotide sequence ID" value="XM_005247002.5"/>
</dbReference>
<dbReference type="RefSeq" id="XP_005247060.2">
    <property type="nucleotide sequence ID" value="XM_005247003.4"/>
</dbReference>
<dbReference type="RefSeq" id="XP_006712538.1">
    <property type="nucleotide sequence ID" value="XM_006712475.3"/>
</dbReference>
<dbReference type="RefSeq" id="XP_011509360.1">
    <molecule id="Q00341-1"/>
    <property type="nucleotide sequence ID" value="XM_011511058.4"/>
</dbReference>
<dbReference type="RefSeq" id="XP_011509362.1">
    <molecule id="Q00341-1"/>
    <property type="nucleotide sequence ID" value="XM_011511060.4"/>
</dbReference>
<dbReference type="RefSeq" id="XP_016859429.1">
    <property type="nucleotide sequence ID" value="XM_017003940.1"/>
</dbReference>
<dbReference type="RefSeq" id="XP_024308601.1">
    <molecule id="Q00341-1"/>
    <property type="nucleotide sequence ID" value="XM_024452833.2"/>
</dbReference>
<dbReference type="RefSeq" id="XP_047300023.1">
    <molecule id="Q00341-1"/>
    <property type="nucleotide sequence ID" value="XM_047444067.1"/>
</dbReference>
<dbReference type="RefSeq" id="XP_047300024.1">
    <molecule id="Q00341-1"/>
    <property type="nucleotide sequence ID" value="XM_047444068.1"/>
</dbReference>
<dbReference type="RefSeq" id="XP_047300025.1">
    <molecule id="Q00341-1"/>
    <property type="nucleotide sequence ID" value="XM_047444069.1"/>
</dbReference>
<dbReference type="RefSeq" id="XP_047300026.1">
    <molecule id="Q00341-1"/>
    <property type="nucleotide sequence ID" value="XM_047444070.1"/>
</dbReference>
<dbReference type="RefSeq" id="XP_047300027.1">
    <molecule id="Q00341-1"/>
    <property type="nucleotide sequence ID" value="XM_047444071.1"/>
</dbReference>
<dbReference type="RefSeq" id="XP_047300028.1">
    <molecule id="Q00341-1"/>
    <property type="nucleotide sequence ID" value="XM_047444072.1"/>
</dbReference>
<dbReference type="RefSeq" id="XP_047300029.1">
    <molecule id="Q00341-1"/>
    <property type="nucleotide sequence ID" value="XM_047444073.1"/>
</dbReference>
<dbReference type="RefSeq" id="XP_047300030.1">
    <molecule id="Q00341-1"/>
    <property type="nucleotide sequence ID" value="XM_047444074.1"/>
</dbReference>
<dbReference type="RefSeq" id="XP_047300031.1">
    <molecule id="Q00341-1"/>
    <property type="nucleotide sequence ID" value="XM_047444075.1"/>
</dbReference>
<dbReference type="RefSeq" id="XP_047300032.1">
    <molecule id="Q00341-1"/>
    <property type="nucleotide sequence ID" value="XM_047444076.1"/>
</dbReference>
<dbReference type="RefSeq" id="XP_054197588.1">
    <molecule id="Q00341-1"/>
    <property type="nucleotide sequence ID" value="XM_054341613.1"/>
</dbReference>
<dbReference type="RefSeq" id="XP_054197589.1">
    <molecule id="Q00341-1"/>
    <property type="nucleotide sequence ID" value="XM_054341614.1"/>
</dbReference>
<dbReference type="RefSeq" id="XP_054197590.1">
    <molecule id="Q00341-1"/>
    <property type="nucleotide sequence ID" value="XM_054341615.1"/>
</dbReference>
<dbReference type="RefSeq" id="XP_054197591.1">
    <molecule id="Q00341-1"/>
    <property type="nucleotide sequence ID" value="XM_054341616.1"/>
</dbReference>
<dbReference type="RefSeq" id="XP_054197592.1">
    <molecule id="Q00341-1"/>
    <property type="nucleotide sequence ID" value="XM_054341617.1"/>
</dbReference>
<dbReference type="RefSeq" id="XP_054197593.1">
    <molecule id="Q00341-1"/>
    <property type="nucleotide sequence ID" value="XM_054341618.1"/>
</dbReference>
<dbReference type="RefSeq" id="XP_054197594.1">
    <molecule id="Q00341-1"/>
    <property type="nucleotide sequence ID" value="XM_054341619.1"/>
</dbReference>
<dbReference type="RefSeq" id="XP_054197595.1">
    <molecule id="Q00341-1"/>
    <property type="nucleotide sequence ID" value="XM_054341620.1"/>
</dbReference>
<dbReference type="RefSeq" id="XP_054197596.1">
    <molecule id="Q00341-1"/>
    <property type="nucleotide sequence ID" value="XM_054341621.1"/>
</dbReference>
<dbReference type="RefSeq" id="XP_054197597.1">
    <molecule id="Q00341-1"/>
    <property type="nucleotide sequence ID" value="XM_054341622.1"/>
</dbReference>
<dbReference type="RefSeq" id="XP_054197598.1">
    <molecule id="Q00341-1"/>
    <property type="nucleotide sequence ID" value="XM_054341623.1"/>
</dbReference>
<dbReference type="RefSeq" id="XP_054197599.1">
    <molecule id="Q00341-1"/>
    <property type="nucleotide sequence ID" value="XM_054341624.1"/>
</dbReference>
<dbReference type="RefSeq" id="XP_054197600.1">
    <molecule id="Q00341-1"/>
    <property type="nucleotide sequence ID" value="XM_054341625.1"/>
</dbReference>
<dbReference type="RefSeq" id="XP_054197601.1">
    <molecule id="Q00341-1"/>
    <property type="nucleotide sequence ID" value="XM_054341626.1"/>
</dbReference>
<dbReference type="PDB" id="1VIG">
    <property type="method" value="NMR"/>
    <property type="chains" value="A=432-502"/>
</dbReference>
<dbReference type="PDB" id="1VIH">
    <property type="method" value="NMR"/>
    <property type="chains" value="A=432-502"/>
</dbReference>
<dbReference type="PDB" id="2CTE">
    <property type="method" value="NMR"/>
    <property type="chains" value="A=142-222"/>
</dbReference>
<dbReference type="PDB" id="2CTF">
    <property type="method" value="NMR"/>
    <property type="chains" value="A=346-434"/>
</dbReference>
<dbReference type="PDB" id="2CTJ">
    <property type="method" value="NMR"/>
    <property type="chains" value="A=645-726"/>
</dbReference>
<dbReference type="PDB" id="2CTK">
    <property type="method" value="NMR"/>
    <property type="chains" value="A=964-1054"/>
</dbReference>
<dbReference type="PDB" id="2CTL">
    <property type="method" value="NMR"/>
    <property type="chains" value="A=1044-1127"/>
</dbReference>
<dbReference type="PDB" id="2CTM">
    <property type="method" value="NMR"/>
    <property type="chains" value="A=1119-1200"/>
</dbReference>
<dbReference type="PDBsum" id="1VIG"/>
<dbReference type="PDBsum" id="1VIH"/>
<dbReference type="PDBsum" id="2CTE"/>
<dbReference type="PDBsum" id="2CTF"/>
<dbReference type="PDBsum" id="2CTJ"/>
<dbReference type="PDBsum" id="2CTK"/>
<dbReference type="PDBsum" id="2CTL"/>
<dbReference type="PDBsum" id="2CTM"/>
<dbReference type="SMR" id="Q00341"/>
<dbReference type="BioGRID" id="109319">
    <property type="interactions" value="889"/>
</dbReference>
<dbReference type="CORUM" id="Q00341"/>
<dbReference type="FunCoup" id="Q00341">
    <property type="interactions" value="2272"/>
</dbReference>
<dbReference type="IntAct" id="Q00341">
    <property type="interactions" value="148"/>
</dbReference>
<dbReference type="MINT" id="Q00341"/>
<dbReference type="STRING" id="9606.ENSP00000375836"/>
<dbReference type="ChEMBL" id="CHEMBL4295796"/>
<dbReference type="GlyGen" id="Q00341">
    <property type="glycosylation" value="2 sites, 1 N-linked glycan (1 site), 1 O-linked glycan (1 site)"/>
</dbReference>
<dbReference type="iPTMnet" id="Q00341"/>
<dbReference type="MetOSite" id="Q00341"/>
<dbReference type="PhosphoSitePlus" id="Q00341"/>
<dbReference type="SwissPalm" id="Q00341"/>
<dbReference type="BioMuta" id="HDLBP"/>
<dbReference type="DMDM" id="218511884"/>
<dbReference type="jPOST" id="Q00341"/>
<dbReference type="MassIVE" id="Q00341"/>
<dbReference type="PaxDb" id="9606-ENSP00000375836"/>
<dbReference type="PeptideAtlas" id="Q00341"/>
<dbReference type="ProteomicsDB" id="16875"/>
<dbReference type="ProteomicsDB" id="57845">
    <molecule id="Q00341-1"/>
</dbReference>
<dbReference type="Pumba" id="Q00341"/>
<dbReference type="Antibodypedia" id="1371">
    <property type="antibodies" value="326 antibodies from 30 providers"/>
</dbReference>
<dbReference type="DNASU" id="3069"/>
<dbReference type="Ensembl" id="ENST00000310931.10">
    <molecule id="Q00341-1"/>
    <property type="protein sequence ID" value="ENSP00000312042.4"/>
    <property type="gene ID" value="ENSG00000115677.18"/>
</dbReference>
<dbReference type="Ensembl" id="ENST00000391975.5">
    <molecule id="Q00341-1"/>
    <property type="protein sequence ID" value="ENSP00000375836.1"/>
    <property type="gene ID" value="ENSG00000115677.18"/>
</dbReference>
<dbReference type="Ensembl" id="ENST00000391976.6">
    <molecule id="Q00341-1"/>
    <property type="protein sequence ID" value="ENSP00000375837.2"/>
    <property type="gene ID" value="ENSG00000115677.18"/>
</dbReference>
<dbReference type="Ensembl" id="ENST00000427183.6">
    <molecule id="Q00341-2"/>
    <property type="protein sequence ID" value="ENSP00000399139.2"/>
    <property type="gene ID" value="ENSG00000115677.18"/>
</dbReference>
<dbReference type="GeneID" id="3069"/>
<dbReference type="KEGG" id="hsa:3069"/>
<dbReference type="MANE-Select" id="ENST00000310931.10">
    <property type="protein sequence ID" value="ENSP00000312042.4"/>
    <property type="RefSeq nucleotide sequence ID" value="NM_005336.6"/>
    <property type="RefSeq protein sequence ID" value="NP_005327.1"/>
</dbReference>
<dbReference type="UCSC" id="uc021vzg.1">
    <molecule id="Q00341-1"/>
    <property type="organism name" value="human"/>
</dbReference>
<dbReference type="AGR" id="HGNC:4857"/>
<dbReference type="CTD" id="3069"/>
<dbReference type="DisGeNET" id="3069"/>
<dbReference type="GeneCards" id="HDLBP"/>
<dbReference type="HGNC" id="HGNC:4857">
    <property type="gene designation" value="HDLBP"/>
</dbReference>
<dbReference type="HPA" id="ENSG00000115677">
    <property type="expression patterns" value="Low tissue specificity"/>
</dbReference>
<dbReference type="MalaCards" id="HDLBP"/>
<dbReference type="MIM" id="142695">
    <property type="type" value="gene"/>
</dbReference>
<dbReference type="neXtProt" id="NX_Q00341"/>
<dbReference type="OpenTargets" id="ENSG00000115677"/>
<dbReference type="PharmGKB" id="PA29235"/>
<dbReference type="VEuPathDB" id="HostDB:ENSG00000115677"/>
<dbReference type="eggNOG" id="KOG2208">
    <property type="taxonomic scope" value="Eukaryota"/>
</dbReference>
<dbReference type="GeneTree" id="ENSGT00900000141059"/>
<dbReference type="InParanoid" id="Q00341"/>
<dbReference type="OMA" id="DHAGQQV"/>
<dbReference type="OrthoDB" id="10027144at2759"/>
<dbReference type="PAN-GO" id="Q00341">
    <property type="GO annotations" value="4 GO annotations based on evolutionary models"/>
</dbReference>
<dbReference type="PhylomeDB" id="Q00341"/>
<dbReference type="TreeFam" id="TF323767"/>
<dbReference type="PathwayCommons" id="Q00341"/>
<dbReference type="Reactome" id="R-HSA-8964011">
    <property type="pathway name" value="HDL clearance"/>
</dbReference>
<dbReference type="SignaLink" id="Q00341"/>
<dbReference type="SIGNOR" id="Q00341"/>
<dbReference type="BioGRID-ORCS" id="3069">
    <property type="hits" value="26 hits in 1165 CRISPR screens"/>
</dbReference>
<dbReference type="CD-CODE" id="FB4E32DD">
    <property type="entry name" value="Presynaptic clusters and postsynaptic densities"/>
</dbReference>
<dbReference type="ChiTaRS" id="HDLBP">
    <property type="organism name" value="human"/>
</dbReference>
<dbReference type="EvolutionaryTrace" id="Q00341"/>
<dbReference type="GeneWiki" id="HDLBP"/>
<dbReference type="GenomeRNAi" id="3069"/>
<dbReference type="Pharos" id="Q00341">
    <property type="development level" value="Tbio"/>
</dbReference>
<dbReference type="PRO" id="PR:Q00341"/>
<dbReference type="Proteomes" id="UP000005640">
    <property type="component" value="Chromosome 2"/>
</dbReference>
<dbReference type="RNAct" id="Q00341">
    <property type="molecule type" value="protein"/>
</dbReference>
<dbReference type="Bgee" id="ENSG00000115677">
    <property type="expression patterns" value="Expressed in stromal cell of endometrium and 207 other cell types or tissues"/>
</dbReference>
<dbReference type="ExpressionAtlas" id="Q00341">
    <property type="expression patterns" value="baseline and differential"/>
</dbReference>
<dbReference type="GO" id="GO:0005737">
    <property type="term" value="C:cytoplasm"/>
    <property type="evidence" value="ECO:0007669"/>
    <property type="project" value="UniProtKB-SubCell"/>
</dbReference>
<dbReference type="GO" id="GO:0034364">
    <property type="term" value="C:high-density lipoprotein particle"/>
    <property type="evidence" value="ECO:0007669"/>
    <property type="project" value="UniProtKB-KW"/>
</dbReference>
<dbReference type="GO" id="GO:0005634">
    <property type="term" value="C:nucleus"/>
    <property type="evidence" value="ECO:0007669"/>
    <property type="project" value="UniProtKB-SubCell"/>
</dbReference>
<dbReference type="GO" id="GO:0005886">
    <property type="term" value="C:plasma membrane"/>
    <property type="evidence" value="ECO:0000304"/>
    <property type="project" value="Reactome"/>
</dbReference>
<dbReference type="GO" id="GO:0045296">
    <property type="term" value="F:cadherin binding"/>
    <property type="evidence" value="ECO:0007005"/>
    <property type="project" value="BHF-UCL"/>
</dbReference>
<dbReference type="GO" id="GO:0008289">
    <property type="term" value="F:lipid binding"/>
    <property type="evidence" value="ECO:0000304"/>
    <property type="project" value="ProtInc"/>
</dbReference>
<dbReference type="GO" id="GO:0003729">
    <property type="term" value="F:mRNA binding"/>
    <property type="evidence" value="ECO:0000318"/>
    <property type="project" value="GO_Central"/>
</dbReference>
<dbReference type="GO" id="GO:0003723">
    <property type="term" value="F:RNA binding"/>
    <property type="evidence" value="ECO:0007005"/>
    <property type="project" value="UniProtKB"/>
</dbReference>
<dbReference type="GO" id="GO:0008203">
    <property type="term" value="P:cholesterol metabolic process"/>
    <property type="evidence" value="ECO:0000304"/>
    <property type="project" value="ProtInc"/>
</dbReference>
<dbReference type="GO" id="GO:0006869">
    <property type="term" value="P:lipid transport"/>
    <property type="evidence" value="ECO:0007669"/>
    <property type="project" value="UniProtKB-KW"/>
</dbReference>
<dbReference type="CDD" id="cd22405">
    <property type="entry name" value="KH-I_Vigilin_rpt1"/>
    <property type="match status" value="1"/>
</dbReference>
<dbReference type="CDD" id="cd22413">
    <property type="entry name" value="KH-I_Vigilin_rpt10"/>
    <property type="match status" value="1"/>
</dbReference>
<dbReference type="CDD" id="cd22414">
    <property type="entry name" value="KH-I_Vigilin_rpt11"/>
    <property type="match status" value="1"/>
</dbReference>
<dbReference type="CDD" id="cd22415">
    <property type="entry name" value="KH-I_Vigilin_rpt12"/>
    <property type="match status" value="1"/>
</dbReference>
<dbReference type="CDD" id="cd22416">
    <property type="entry name" value="KH-I_Vigilin_rpt13"/>
    <property type="match status" value="1"/>
</dbReference>
<dbReference type="CDD" id="cd22417">
    <property type="entry name" value="KH-I_Vigilin_rpt14"/>
    <property type="match status" value="1"/>
</dbReference>
<dbReference type="CDD" id="cd22418">
    <property type="entry name" value="KH-I_Vigilin_rpt15"/>
    <property type="match status" value="1"/>
</dbReference>
<dbReference type="CDD" id="cd22406">
    <property type="entry name" value="KH-I_Vigilin_rpt2"/>
    <property type="match status" value="1"/>
</dbReference>
<dbReference type="CDD" id="cd22407">
    <property type="entry name" value="KH-I_Vigilin_rpt3"/>
    <property type="match status" value="1"/>
</dbReference>
<dbReference type="CDD" id="cd22408">
    <property type="entry name" value="KH-I_Vigilin_rpt4"/>
    <property type="match status" value="1"/>
</dbReference>
<dbReference type="CDD" id="cd22409">
    <property type="entry name" value="KH-I_Vigilin_rpt5"/>
    <property type="match status" value="1"/>
</dbReference>
<dbReference type="CDD" id="cd02394">
    <property type="entry name" value="KH-I_Vigilin_rpt6"/>
    <property type="match status" value="1"/>
</dbReference>
<dbReference type="CDD" id="cd22410">
    <property type="entry name" value="KH-I_Vigilin_rpt7"/>
    <property type="match status" value="1"/>
</dbReference>
<dbReference type="CDD" id="cd22411">
    <property type="entry name" value="KH-I_Vigilin_rpt8"/>
    <property type="match status" value="1"/>
</dbReference>
<dbReference type="CDD" id="cd22412">
    <property type="entry name" value="KH-I_Vigilin_rpt9"/>
    <property type="match status" value="1"/>
</dbReference>
<dbReference type="FunFam" id="3.30.1370.10:FF:000046">
    <property type="entry name" value="High density lipoprotein binding protein"/>
    <property type="match status" value="1"/>
</dbReference>
<dbReference type="FunFam" id="3.30.1370.10:FF:000057">
    <property type="entry name" value="High density lipoprotein binding protein"/>
    <property type="match status" value="1"/>
</dbReference>
<dbReference type="FunFam" id="3.30.1370.10:FF:000061">
    <property type="entry name" value="High density lipoprotein binding protein"/>
    <property type="match status" value="1"/>
</dbReference>
<dbReference type="FunFam" id="3.30.1370.10:FF:000067">
    <property type="entry name" value="High density lipoprotein binding protein"/>
    <property type="match status" value="1"/>
</dbReference>
<dbReference type="FunFam" id="3.30.1370.10:FF:000042">
    <property type="entry name" value="Vigilin isoform X1"/>
    <property type="match status" value="1"/>
</dbReference>
<dbReference type="FunFam" id="3.30.1370.10:FF:000018">
    <property type="entry name" value="vigilin isoform X1"/>
    <property type="match status" value="3"/>
</dbReference>
<dbReference type="FunFam" id="3.30.1370.10:FF:000033">
    <property type="entry name" value="vigilin isoform X1"/>
    <property type="match status" value="1"/>
</dbReference>
<dbReference type="FunFam" id="3.30.1370.10:FF:000039">
    <property type="entry name" value="vigilin isoform X1"/>
    <property type="match status" value="1"/>
</dbReference>
<dbReference type="FunFam" id="3.30.1370.10:FF:000041">
    <property type="entry name" value="vigilin isoform X1"/>
    <property type="match status" value="1"/>
</dbReference>
<dbReference type="FunFam" id="3.30.1370.10:FF:000050">
    <property type="entry name" value="vigilin isoform X1"/>
    <property type="match status" value="1"/>
</dbReference>
<dbReference type="FunFam" id="3.30.1370.10:FF:000062">
    <property type="entry name" value="vigilin isoform X1"/>
    <property type="match status" value="1"/>
</dbReference>
<dbReference type="Gene3D" id="3.30.1370.10">
    <property type="entry name" value="K Homology domain, type 1"/>
    <property type="match status" value="14"/>
</dbReference>
<dbReference type="InterPro" id="IPR004087">
    <property type="entry name" value="KH_dom"/>
</dbReference>
<dbReference type="InterPro" id="IPR004088">
    <property type="entry name" value="KH_dom_type_1"/>
</dbReference>
<dbReference type="InterPro" id="IPR036612">
    <property type="entry name" value="KH_dom_type_1_sf"/>
</dbReference>
<dbReference type="PANTHER" id="PTHR10627">
    <property type="entry name" value="SCP160"/>
    <property type="match status" value="1"/>
</dbReference>
<dbReference type="PANTHER" id="PTHR10627:SF34">
    <property type="entry name" value="VIGILIN"/>
    <property type="match status" value="1"/>
</dbReference>
<dbReference type="Pfam" id="PF00013">
    <property type="entry name" value="KH_1"/>
    <property type="match status" value="14"/>
</dbReference>
<dbReference type="Pfam" id="PF24668">
    <property type="entry name" value="KH_Vigilin"/>
    <property type="match status" value="1"/>
</dbReference>
<dbReference type="SMART" id="SM00322">
    <property type="entry name" value="KH"/>
    <property type="match status" value="14"/>
</dbReference>
<dbReference type="SUPFAM" id="SSF54791">
    <property type="entry name" value="Eukaryotic type KH-domain (KH-domain type I)"/>
    <property type="match status" value="12"/>
</dbReference>
<dbReference type="PROSITE" id="PS50084">
    <property type="entry name" value="KH_TYPE_1"/>
    <property type="match status" value="14"/>
</dbReference>
<evidence type="ECO:0000250" key="1">
    <source>
        <dbReference type="UniProtKB" id="Q8VDJ3"/>
    </source>
</evidence>
<evidence type="ECO:0000250" key="2">
    <source>
        <dbReference type="UniProtKB" id="Q9Z1A6"/>
    </source>
</evidence>
<evidence type="ECO:0000255" key="3"/>
<evidence type="ECO:0000255" key="4">
    <source>
        <dbReference type="PROSITE-ProRule" id="PRU00117"/>
    </source>
</evidence>
<evidence type="ECO:0000256" key="5">
    <source>
        <dbReference type="SAM" id="MobiDB-lite"/>
    </source>
</evidence>
<evidence type="ECO:0000269" key="6">
    <source>
    </source>
</evidence>
<evidence type="ECO:0000269" key="7">
    <source>
    </source>
</evidence>
<evidence type="ECO:0000269" key="8">
    <source ref="5"/>
</evidence>
<evidence type="ECO:0000303" key="9">
    <source>
    </source>
</evidence>
<evidence type="ECO:0007744" key="10">
    <source>
    </source>
</evidence>
<evidence type="ECO:0007744" key="11">
    <source>
    </source>
</evidence>
<evidence type="ECO:0007744" key="12">
    <source>
    </source>
</evidence>
<evidence type="ECO:0007744" key="13">
    <source>
    </source>
</evidence>
<evidence type="ECO:0007744" key="14">
    <source>
    </source>
</evidence>
<evidence type="ECO:0007744" key="15">
    <source>
    </source>
</evidence>
<evidence type="ECO:0007744" key="16">
    <source>
    </source>
</evidence>
<evidence type="ECO:0007744" key="17">
    <source>
    </source>
</evidence>
<evidence type="ECO:0007744" key="18">
    <source>
    </source>
</evidence>
<evidence type="ECO:0007744" key="19">
    <source>
    </source>
</evidence>
<evidence type="ECO:0007829" key="20">
    <source>
        <dbReference type="PDB" id="1VIG"/>
    </source>
</evidence>
<evidence type="ECO:0007829" key="21">
    <source>
        <dbReference type="PDB" id="1VIH"/>
    </source>
</evidence>
<evidence type="ECO:0007829" key="22">
    <source>
        <dbReference type="PDB" id="2CTE"/>
    </source>
</evidence>
<evidence type="ECO:0007829" key="23">
    <source>
        <dbReference type="PDB" id="2CTF"/>
    </source>
</evidence>
<evidence type="ECO:0007829" key="24">
    <source>
        <dbReference type="PDB" id="2CTJ"/>
    </source>
</evidence>
<evidence type="ECO:0007829" key="25">
    <source>
        <dbReference type="PDB" id="2CTK"/>
    </source>
</evidence>
<evidence type="ECO:0007829" key="26">
    <source>
        <dbReference type="PDB" id="2CTL"/>
    </source>
</evidence>
<evidence type="ECO:0007829" key="27">
    <source>
        <dbReference type="PDB" id="2CTM"/>
    </source>
</evidence>
<accession>Q00341</accession>
<accession>B4DTQ2</accession>
<accession>E7EM71</accession>
<accession>Q53QU2</accession>
<accession>Q9UCY3</accession>
<sequence length="1268" mass="141440">MSSVAVLTQESFAEHRSGLVPQQIKVATLNSEEESDPPTYKDAFPPLPEKAACLESAQEPAGAWGNKIRPIKASVITQVFHVPLEERKYKDMNQFGEGEQAKICLEIMQRTGAHLELSLAKDQGLSIMVSGKLDAVMKARKDIVARLQTQASATVAIPKEHHRFVIGKNGEKLQDLELKTATKIQIPRPDDPSNQIKITGTKEGIEKARHEVLLISAEQDKRAVERLEVEKAFHPFIAGPYNRLVGEIMQETGTRINIPPPSVNRTEIVFTGEKEQLAQAVARIKKIYEEKKKKTTTIAVEVKKSQHKYVIGPKGNSLQEILERTGVSVEIPPSDSISETVILRGEPEKLGQALTEVYAKANSFTVSSVAAPSWLHRFIIGKKGQNLAKITQQMPKVHIEFTEGEDKITLEGPTEDVNVAQEQIEGMVKDLINRMDYVEINIDHKFHRHLIGKSGANINRIKDQYKVSVRIPPDSEKSNLIRIEGDPQGVQQAKRELLELASRMENERTKDLIIEQRFHRTIIGQKGERIREIRDKFPEVIINFPDPAQKSDIVQLRGPKNEVEKCTKYMQKMVADLVENSYSISVPIFKQFHKNIIGKGGANIKKIREESNTKIDLPAENSNSETIIITGKRANCEAARSRILSIQKDLANIAEVEVSIPAKLHNSLIGTKGRLIRSIMEECGGVHIHFPVEGSGSDTVVIRGPSSDVEKAKKQLLHLAEEKQTKSFTVDIRAKPEYHKFLIGKGGGKIRKVRDSTGARVIFPAAEDKDQDLITIIGKEDAVREAQKELEALIQNLDNVVEDSMLVDPKHHRHFVIRRGQVLREIAEEYGGVMVSFPRSGTQSDKVTLKGAKDCVEAAKKRIQEIIEDLEAQVTLECAIPQKFHRSVMGPKGSRIQQITRDFSVQIKFPDREENAVHSTEPVVQENGDEAGEGREAKDCDPGSPRRCDIIIISGRKEKCEAAKEALEALVPVTIEVEVPFDLHRYVIGQKGSGIRKMMDEFEVNIHVPAPELQSDIIAITGLAANLDRAKAGLLERVKELQAEQEDRALRSFKLSVTVDPKYHPKIIGRKGAVITQIRLEHDVNIQFPDKDDGNQPQDQITITGYEKNTEAARDAILRIVGELEQMVSEDVPLDHRVHARIIGARGKAIRKIMDEFKVDIRFPQSGAPDPNCVTVTGLPENVEEAIDHILNLEEEYLADVVDSEALQVYMKPPAHEEAKAPSRGFVVRDAPWTASSSEKAPDMSSSEEFPSFGAQVAPKTLPWGPKR</sequence>
<feature type="initiator methionine" description="Removed" evidence="8 13 17">
    <location>
        <position position="1"/>
    </location>
</feature>
<feature type="chain" id="PRO_0000050131" description="Vigilin">
    <location>
        <begin position="2"/>
        <end position="1268"/>
    </location>
</feature>
<feature type="domain" description="KH 1" evidence="4">
    <location>
        <begin position="158"/>
        <end position="229"/>
    </location>
</feature>
<feature type="domain" description="KH 2" evidence="4">
    <location>
        <begin position="230"/>
        <end position="302"/>
    </location>
</feature>
<feature type="domain" description="KH 3" evidence="4">
    <location>
        <begin position="303"/>
        <end position="371"/>
    </location>
</feature>
<feature type="domain" description="KH 4" evidence="4">
    <location>
        <begin position="372"/>
        <end position="442"/>
    </location>
</feature>
<feature type="domain" description="KH 5" evidence="4">
    <location>
        <begin position="443"/>
        <end position="514"/>
    </location>
</feature>
<feature type="domain" description="KH 6" evidence="4">
    <location>
        <begin position="515"/>
        <end position="588"/>
    </location>
</feature>
<feature type="domain" description="KH 7" evidence="4">
    <location>
        <begin position="589"/>
        <end position="660"/>
    </location>
</feature>
<feature type="domain" description="KH 8" evidence="4">
    <location>
        <begin position="661"/>
        <end position="734"/>
    </location>
</feature>
<feature type="domain" description="KH 9" evidence="4">
    <location>
        <begin position="735"/>
        <end position="807"/>
    </location>
</feature>
<feature type="domain" description="KH 10" evidence="4">
    <location>
        <begin position="808"/>
        <end position="880"/>
    </location>
</feature>
<feature type="domain" description="KH 11" evidence="4">
    <location>
        <begin position="881"/>
        <end position="979"/>
    </location>
</feature>
<feature type="domain" description="KH 12" evidence="4">
    <location>
        <begin position="980"/>
        <end position="1059"/>
    </location>
</feature>
<feature type="domain" description="KH 13" evidence="4">
    <location>
        <begin position="1060"/>
        <end position="1134"/>
    </location>
</feature>
<feature type="domain" description="KH 14" evidence="4">
    <location>
        <begin position="1135"/>
        <end position="1209"/>
    </location>
</feature>
<feature type="region of interest" description="Disordered" evidence="5">
    <location>
        <begin position="914"/>
        <end position="944"/>
    </location>
</feature>
<feature type="region of interest" description="Disordered" evidence="5">
    <location>
        <begin position="1233"/>
        <end position="1268"/>
    </location>
</feature>
<feature type="compositionally biased region" description="Basic and acidic residues" evidence="5">
    <location>
        <begin position="932"/>
        <end position="944"/>
    </location>
</feature>
<feature type="compositionally biased region" description="Polar residues" evidence="5">
    <location>
        <begin position="1234"/>
        <end position="1249"/>
    </location>
</feature>
<feature type="modified residue" description="N-acetylserine" evidence="8 13 17">
    <location>
        <position position="2"/>
    </location>
</feature>
<feature type="modified residue" description="Phosphothreonine" evidence="18">
    <location>
        <position position="8"/>
    </location>
</feature>
<feature type="modified residue" description="Phosphoserine" evidence="18">
    <location>
        <position position="11"/>
    </location>
</feature>
<feature type="modified residue" description="Phosphoserine" evidence="11 12 14 15 16 18 19">
    <location>
        <position position="31"/>
    </location>
</feature>
<feature type="modified residue" description="Phosphoserine" evidence="2">
    <location>
        <position position="35"/>
    </location>
</feature>
<feature type="modified residue" description="Phosphothreonine" evidence="3">
    <location>
        <position position="295"/>
    </location>
</feature>
<feature type="modified residue" description="Phosphothreonine" evidence="3">
    <location>
        <position position="296"/>
    </location>
</feature>
<feature type="modified residue" description="Phosphoserine" evidence="18">
    <location>
        <position position="317"/>
    </location>
</feature>
<feature type="modified residue" description="Phosphotyrosine" evidence="10">
    <location>
        <position position="437"/>
    </location>
</feature>
<feature type="modified residue" description="Phosphoserine" evidence="2">
    <location>
        <position position="645"/>
    </location>
</feature>
<feature type="modified residue" description="N6-acetyllysine" evidence="1">
    <location>
        <position position="991"/>
    </location>
</feature>
<feature type="modified residue" description="Phosphoserine" evidence="19">
    <location>
        <position position="1247"/>
    </location>
</feature>
<feature type="modified residue" description="Phosphoserine" evidence="19">
    <location>
        <position position="1252"/>
    </location>
</feature>
<feature type="splice variant" id="VSP_044924" description="In isoform 2." evidence="9">
    <original>M</original>
    <variation>MHLAERDRWLFVATVMMHFVSIKSGFPGLCVGVRSTM</variation>
    <location>
        <position position="1"/>
    </location>
</feature>
<feature type="splice variant" id="VSP_044925" description="In isoform 2." evidence="9">
    <location>
        <begin position="291"/>
        <end position="359"/>
    </location>
</feature>
<feature type="sequence variant" id="VAR_047976" description="In dbSNP:rs11891776.">
    <original>A</original>
    <variation>S</variation>
    <location>
        <position position="61"/>
    </location>
</feature>
<feature type="sequence variant" id="VAR_055981" description="In dbSNP:rs7572799.">
    <original>V</original>
    <variation>I</variation>
    <location>
        <position position="229"/>
    </location>
</feature>
<feature type="sequence variant" id="VAR_024511" description="In dbSNP:rs7578199.">
    <original>N</original>
    <variation>S</variation>
    <location>
        <position position="418"/>
    </location>
</feature>
<feature type="sequence variant" id="VAR_036052" description="In a breast cancer sample; somatic mutation." evidence="6">
    <original>K</original>
    <variation>N</variation>
    <location>
        <position position="568"/>
    </location>
</feature>
<feature type="sequence variant" id="VAR_036053" description="In a breast cancer sample; somatic mutation." evidence="6">
    <original>D</original>
    <variation>V</variation>
    <location>
        <position position="939"/>
    </location>
</feature>
<feature type="sequence variant" id="VAR_029279" description="In dbSNP:rs12281.">
    <original>W</original>
    <variation>L</variation>
    <location>
        <position position="1264"/>
    </location>
</feature>
<feature type="strand" evidence="22">
    <location>
        <begin position="151"/>
        <end position="156"/>
    </location>
</feature>
<feature type="turn" evidence="22">
    <location>
        <begin position="159"/>
        <end position="161"/>
    </location>
</feature>
<feature type="helix" evidence="22">
    <location>
        <begin position="162"/>
        <end position="166"/>
    </location>
</feature>
<feature type="strand" evidence="22">
    <location>
        <begin position="168"/>
        <end position="170"/>
    </location>
</feature>
<feature type="helix" evidence="22">
    <location>
        <begin position="172"/>
        <end position="179"/>
    </location>
</feature>
<feature type="strand" evidence="22">
    <location>
        <begin position="195"/>
        <end position="200"/>
    </location>
</feature>
<feature type="helix" evidence="22">
    <location>
        <begin position="202"/>
        <end position="220"/>
    </location>
</feature>
<feature type="strand" evidence="23">
    <location>
        <begin position="365"/>
        <end position="370"/>
    </location>
</feature>
<feature type="helix" evidence="23">
    <location>
        <begin position="376"/>
        <end position="380"/>
    </location>
</feature>
<feature type="turn" evidence="23">
    <location>
        <begin position="381"/>
        <end position="384"/>
    </location>
</feature>
<feature type="helix" evidence="23">
    <location>
        <begin position="386"/>
        <end position="393"/>
    </location>
</feature>
<feature type="strand" evidence="23">
    <location>
        <begin position="395"/>
        <end position="401"/>
    </location>
</feature>
<feature type="strand" evidence="23">
    <location>
        <begin position="403"/>
        <end position="405"/>
    </location>
</feature>
<feature type="strand" evidence="23">
    <location>
        <begin position="407"/>
        <end position="412"/>
    </location>
</feature>
<feature type="helix" evidence="23">
    <location>
        <begin position="414"/>
        <end position="434"/>
    </location>
</feature>
<feature type="strand" evidence="20">
    <location>
        <begin position="436"/>
        <end position="442"/>
    </location>
</feature>
<feature type="helix" evidence="20">
    <location>
        <begin position="446"/>
        <end position="450"/>
    </location>
</feature>
<feature type="turn" evidence="21">
    <location>
        <begin position="452"/>
        <end position="454"/>
    </location>
</feature>
<feature type="helix" evidence="20">
    <location>
        <begin position="457"/>
        <end position="464"/>
    </location>
</feature>
<feature type="strand" evidence="20">
    <location>
        <begin position="468"/>
        <end position="470"/>
    </location>
</feature>
<feature type="strand" evidence="20">
    <location>
        <begin position="476"/>
        <end position="487"/>
    </location>
</feature>
<feature type="helix" evidence="20">
    <location>
        <begin position="488"/>
        <end position="499"/>
    </location>
</feature>
<feature type="strand" evidence="24">
    <location>
        <begin position="656"/>
        <end position="659"/>
    </location>
</feature>
<feature type="helix" evidence="24">
    <location>
        <begin position="662"/>
        <end position="669"/>
    </location>
</feature>
<feature type="strand" evidence="24">
    <location>
        <begin position="671"/>
        <end position="673"/>
    </location>
</feature>
<feature type="helix" evidence="24">
    <location>
        <begin position="674"/>
        <end position="683"/>
    </location>
</feature>
<feature type="strand" evidence="24">
    <location>
        <begin position="687"/>
        <end position="689"/>
    </location>
</feature>
<feature type="turn" evidence="24">
    <location>
        <begin position="693"/>
        <end position="696"/>
    </location>
</feature>
<feature type="strand" evidence="24">
    <location>
        <begin position="699"/>
        <end position="704"/>
    </location>
</feature>
<feature type="helix" evidence="24">
    <location>
        <begin position="706"/>
        <end position="723"/>
    </location>
</feature>
<feature type="strand" evidence="25">
    <location>
        <begin position="973"/>
        <end position="978"/>
    </location>
</feature>
<feature type="helix" evidence="25">
    <location>
        <begin position="981"/>
        <end position="988"/>
    </location>
</feature>
<feature type="strand" evidence="25">
    <location>
        <begin position="990"/>
        <end position="992"/>
    </location>
</feature>
<feature type="helix" evidence="25">
    <location>
        <begin position="993"/>
        <end position="1001"/>
    </location>
</feature>
<feature type="strand" evidence="25">
    <location>
        <begin position="1005"/>
        <end position="1007"/>
    </location>
</feature>
<feature type="turn" evidence="25">
    <location>
        <begin position="1011"/>
        <end position="1013"/>
    </location>
</feature>
<feature type="strand" evidence="25">
    <location>
        <begin position="1017"/>
        <end position="1022"/>
    </location>
</feature>
<feature type="helix" evidence="25">
    <location>
        <begin position="1024"/>
        <end position="1050"/>
    </location>
</feature>
<feature type="strand" evidence="26">
    <location>
        <begin position="1054"/>
        <end position="1058"/>
    </location>
</feature>
<feature type="turn" evidence="26">
    <location>
        <begin position="1061"/>
        <end position="1063"/>
    </location>
</feature>
<feature type="helix" evidence="26">
    <location>
        <begin position="1064"/>
        <end position="1067"/>
    </location>
</feature>
<feature type="strand" evidence="26">
    <location>
        <begin position="1070"/>
        <end position="1072"/>
    </location>
</feature>
<feature type="helix" evidence="26">
    <location>
        <begin position="1074"/>
        <end position="1082"/>
    </location>
</feature>
<feature type="strand" evidence="26">
    <location>
        <begin position="1085"/>
        <end position="1087"/>
    </location>
</feature>
<feature type="turn" evidence="26">
    <location>
        <begin position="1091"/>
        <end position="1093"/>
    </location>
</feature>
<feature type="strand" evidence="26">
    <location>
        <begin position="1098"/>
        <end position="1105"/>
    </location>
</feature>
<feature type="helix" evidence="26">
    <location>
        <begin position="1107"/>
        <end position="1126"/>
    </location>
</feature>
<feature type="strand" evidence="27">
    <location>
        <begin position="1130"/>
        <end position="1133"/>
    </location>
</feature>
<feature type="turn" evidence="27">
    <location>
        <begin position="1136"/>
        <end position="1138"/>
    </location>
</feature>
<feature type="helix" evidence="27">
    <location>
        <begin position="1139"/>
        <end position="1143"/>
    </location>
</feature>
<feature type="strand" evidence="27">
    <location>
        <begin position="1145"/>
        <end position="1147"/>
    </location>
</feature>
<feature type="helix" evidence="27">
    <location>
        <begin position="1149"/>
        <end position="1157"/>
    </location>
</feature>
<feature type="strand" evidence="27">
    <location>
        <begin position="1160"/>
        <end position="1162"/>
    </location>
</feature>
<feature type="strand" evidence="27">
    <location>
        <begin position="1173"/>
        <end position="1178"/>
    </location>
</feature>
<feature type="helix" evidence="27">
    <location>
        <begin position="1180"/>
        <end position="1198"/>
    </location>
</feature>
<proteinExistence type="evidence at protein level"/>
<name>VIGLN_HUMAN</name>
<gene>
    <name type="primary">HDLBP</name>
    <name type="synonym">HBP</name>
    <name type="synonym">VGL</name>
</gene>
<keyword id="KW-0002">3D-structure</keyword>
<keyword id="KW-0007">Acetylation</keyword>
<keyword id="KW-0025">Alternative splicing</keyword>
<keyword id="KW-0153">Cholesterol metabolism</keyword>
<keyword id="KW-0963">Cytoplasm</keyword>
<keyword id="KW-0903">Direct protein sequencing</keyword>
<keyword id="KW-0345">HDL</keyword>
<keyword id="KW-0443">Lipid metabolism</keyword>
<keyword id="KW-0445">Lipid transport</keyword>
<keyword id="KW-0539">Nucleus</keyword>
<keyword id="KW-0597">Phosphoprotein</keyword>
<keyword id="KW-1267">Proteomics identification</keyword>
<keyword id="KW-1185">Reference proteome</keyword>
<keyword id="KW-0677">Repeat</keyword>
<keyword id="KW-0694">RNA-binding</keyword>
<keyword id="KW-0753">Steroid metabolism</keyword>
<keyword id="KW-1207">Sterol metabolism</keyword>
<keyword id="KW-0813">Transport</keyword>